<sequence length="325" mass="37233">MNALTAVKANTDDLAQRHTGFTLAPSAQSPRLLALTFTADTTKQFLHQVAQWPVQALEYKSFLRFKIGKILDDLCGNQLQPLLIKTLLNRAQGALLISAEGIDDVAQAEEMVKLATAVAHLIGRSNYDAMSGQYYARFVVKNVDNSDSYLRQPHRVMELHNDGTYVEEVTDYVLMMKIDEQNMEGGNSLLLHLDDWEHLESFFTHPLARRVMRWAAPPSKNVSHDVWHPVFDVDQQGRPVMRYIDQFVQPKDFEEGVWLSELSDALETSQNILSVPVPVGKFLLINNLFWLHGRDRFTPHPDLRRELMRQRGYFAYAASHYQTHQ</sequence>
<keyword id="KW-0223">Dioxygenase</keyword>
<keyword id="KW-0408">Iron</keyword>
<keyword id="KW-0479">Metal-binding</keyword>
<keyword id="KW-0560">Oxidoreductase</keyword>
<gene>
    <name evidence="1" type="primary">glaH</name>
    <name type="synonym">csiD</name>
    <name type="ordered locus">SL1344_2773</name>
</gene>
<name>GLAH_SALTS</name>
<protein>
    <recommendedName>
        <fullName evidence="1">Glutarate 2-hydroxylase</fullName>
        <shortName evidence="1">G-2-H</shortName>
        <ecNumber evidence="1">1.14.11.64</ecNumber>
    </recommendedName>
</protein>
<reference key="1">
    <citation type="journal article" date="2012" name="Proc. Natl. Acad. Sci. U.S.A.">
        <title>The transcriptional landscape and small RNAs of Salmonella enterica serovar Typhimurium.</title>
        <authorList>
            <person name="Kroger C."/>
            <person name="Dillon S.C."/>
            <person name="Cameron A.D."/>
            <person name="Papenfort K."/>
            <person name="Sivasankaran S.K."/>
            <person name="Hokamp K."/>
            <person name="Chao Y."/>
            <person name="Sittka A."/>
            <person name="Hebrard M."/>
            <person name="Handler K."/>
            <person name="Colgan A."/>
            <person name="Leekitcharoenphon P."/>
            <person name="Langridge G.C."/>
            <person name="Lohan A.J."/>
            <person name="Loftus B."/>
            <person name="Lucchini S."/>
            <person name="Ussery D.W."/>
            <person name="Dorman C.J."/>
            <person name="Thomson N.R."/>
            <person name="Vogel J."/>
            <person name="Hinton J.C."/>
        </authorList>
    </citation>
    <scope>NUCLEOTIDE SEQUENCE [LARGE SCALE GENOMIC DNA]</scope>
    <source>
        <strain>SL1344</strain>
    </source>
</reference>
<reference key="2">
    <citation type="journal article" date="2000" name="Infect. Immun.">
        <title>mig-14 is a horizontally acquired, host-induced gene required for Salmonella enterica lethal infection in the murine model of typhoid fever.</title>
        <authorList>
            <person name="Valdivia R.H."/>
            <person name="Cirillo D.M."/>
            <person name="Lee A.K."/>
            <person name="Bouley D.M."/>
            <person name="Falkow S."/>
        </authorList>
    </citation>
    <scope>NUCLEOTIDE SEQUENCE [GENOMIC DNA] OF 1-293</scope>
    <source>
        <strain>SL1344</strain>
    </source>
</reference>
<feature type="chain" id="PRO_0000405413" description="Glutarate 2-hydroxylase">
    <location>
        <begin position="1"/>
        <end position="325"/>
    </location>
</feature>
<feature type="binding site" evidence="1">
    <location>
        <position position="160"/>
    </location>
    <ligand>
        <name>Fe cation</name>
        <dbReference type="ChEBI" id="CHEBI:24875"/>
    </ligand>
</feature>
<feature type="binding site" evidence="1">
    <location>
        <position position="162"/>
    </location>
    <ligand>
        <name>Fe cation</name>
        <dbReference type="ChEBI" id="CHEBI:24875"/>
    </ligand>
</feature>
<feature type="binding site" evidence="1">
    <location>
        <position position="292"/>
    </location>
    <ligand>
        <name>Fe cation</name>
        <dbReference type="ChEBI" id="CHEBI:24875"/>
    </ligand>
</feature>
<feature type="sequence conflict" description="In Ref. 2; AAG31208." evidence="2" ref="2">
    <original>E</original>
    <variation>Q</variation>
    <location>
        <position position="110"/>
    </location>
</feature>
<evidence type="ECO:0000255" key="1">
    <source>
        <dbReference type="HAMAP-Rule" id="MF_01083"/>
    </source>
</evidence>
<evidence type="ECO:0000305" key="2"/>
<proteinExistence type="inferred from homology"/>
<organism>
    <name type="scientific">Salmonella typhimurium (strain SL1344)</name>
    <dbReference type="NCBI Taxonomy" id="216597"/>
    <lineage>
        <taxon>Bacteria</taxon>
        <taxon>Pseudomonadati</taxon>
        <taxon>Pseudomonadota</taxon>
        <taxon>Gammaproteobacteria</taxon>
        <taxon>Enterobacterales</taxon>
        <taxon>Enterobacteriaceae</taxon>
        <taxon>Salmonella</taxon>
    </lineage>
</organism>
<comment type="function">
    <text evidence="1">Acts as an alpha-ketoglutarate-dependent dioxygenase catalyzing hydroxylation of glutarate (GA) to L-2-hydroxyglutarate (L2HG). Functions in a L-lysine degradation pathway that proceeds via cadaverine, glutarate and L-2-hydroxyglutarate.</text>
</comment>
<comment type="catalytic activity">
    <reaction evidence="1">
        <text>glutarate + 2-oxoglutarate + O2 = (S)-2-hydroxyglutarate + succinate + CO2</text>
        <dbReference type="Rhea" id="RHEA:13821"/>
        <dbReference type="ChEBI" id="CHEBI:15379"/>
        <dbReference type="ChEBI" id="CHEBI:16526"/>
        <dbReference type="ChEBI" id="CHEBI:16782"/>
        <dbReference type="ChEBI" id="CHEBI:16810"/>
        <dbReference type="ChEBI" id="CHEBI:30031"/>
        <dbReference type="ChEBI" id="CHEBI:30921"/>
        <dbReference type="EC" id="1.14.11.64"/>
    </reaction>
    <physiologicalReaction direction="left-to-right" evidence="1">
        <dbReference type="Rhea" id="RHEA:13822"/>
    </physiologicalReaction>
</comment>
<comment type="cofactor">
    <cofactor evidence="1">
        <name>Fe(2+)</name>
        <dbReference type="ChEBI" id="CHEBI:29033"/>
    </cofactor>
    <text evidence="1">Binds 1 Fe(2+) ion per subunit.</text>
</comment>
<comment type="pathway">
    <text evidence="1">Amino-acid degradation.</text>
</comment>
<comment type="subunit">
    <text evidence="1">Homotetramer.</text>
</comment>
<comment type="similarity">
    <text evidence="1">Belongs to the glutarate hydroxylase family.</text>
</comment>
<comment type="sequence caution" evidence="2">
    <conflict type="erroneous initiation">
        <sequence resource="EMBL-CDS" id="AAG31208"/>
    </conflict>
    <text>Extended N-terminus.</text>
</comment>
<comment type="sequence caution" evidence="2">
    <conflict type="erroneous initiation">
        <sequence resource="EMBL-CDS" id="CBW18871"/>
    </conflict>
    <text>Extended N-terminus.</text>
</comment>
<dbReference type="EC" id="1.14.11.64" evidence="1"/>
<dbReference type="EMBL" id="FQ312003">
    <property type="protein sequence ID" value="CBW18871.1"/>
    <property type="status" value="ALT_INIT"/>
    <property type="molecule type" value="Genomic_DNA"/>
</dbReference>
<dbReference type="EMBL" id="AF020810">
    <property type="protein sequence ID" value="AAG31208.1"/>
    <property type="status" value="ALT_INIT"/>
    <property type="molecule type" value="Genomic_DNA"/>
</dbReference>
<dbReference type="RefSeq" id="WP_000993096.1">
    <property type="nucleotide sequence ID" value="NZ_QASL01000009.1"/>
</dbReference>
<dbReference type="SMR" id="E1WA38"/>
<dbReference type="KEGG" id="sey:SL1344_2773"/>
<dbReference type="PATRIC" id="fig|216597.6.peg.3086"/>
<dbReference type="HOGENOM" id="CLU_075277_0_0_6"/>
<dbReference type="BioCyc" id="SENT216597:SL1344_RS14440-MONOMER"/>
<dbReference type="Proteomes" id="UP000008962">
    <property type="component" value="Chromosome"/>
</dbReference>
<dbReference type="GO" id="GO:0008198">
    <property type="term" value="F:ferrous iron binding"/>
    <property type="evidence" value="ECO:0007669"/>
    <property type="project" value="UniProtKB-UniRule"/>
</dbReference>
<dbReference type="GO" id="GO:0106343">
    <property type="term" value="F:glutarate dioxygenase activity"/>
    <property type="evidence" value="ECO:0007669"/>
    <property type="project" value="UniProtKB-EC"/>
</dbReference>
<dbReference type="GO" id="GO:0050498">
    <property type="term" value="F:oxidoreductase activity, acting on paired donors, with incorporation or reduction of molecular oxygen, with 2-oxoglutarate as one donor, and the other dehydrogenated"/>
    <property type="evidence" value="ECO:0007669"/>
    <property type="project" value="UniProtKB-UniRule"/>
</dbReference>
<dbReference type="GO" id="GO:0019477">
    <property type="term" value="P:L-lysine catabolic process"/>
    <property type="evidence" value="ECO:0007669"/>
    <property type="project" value="UniProtKB-UniRule"/>
</dbReference>
<dbReference type="CDD" id="cd00250">
    <property type="entry name" value="CAS_like"/>
    <property type="match status" value="1"/>
</dbReference>
<dbReference type="FunFam" id="3.60.130.10:FF:000004">
    <property type="entry name" value="Glutarate 2-hydroxylase"/>
    <property type="match status" value="1"/>
</dbReference>
<dbReference type="Gene3D" id="3.60.130.10">
    <property type="entry name" value="Clavaminate synthase-like"/>
    <property type="match status" value="1"/>
</dbReference>
<dbReference type="HAMAP" id="MF_01083">
    <property type="entry name" value="glutarate_hydroxylase"/>
    <property type="match status" value="1"/>
</dbReference>
<dbReference type="InterPro" id="IPR015038">
    <property type="entry name" value="GlaH"/>
</dbReference>
<dbReference type="InterPro" id="IPR042098">
    <property type="entry name" value="TauD-like_sf"/>
</dbReference>
<dbReference type="NCBIfam" id="NF002814">
    <property type="entry name" value="PRK02963.1"/>
    <property type="match status" value="1"/>
</dbReference>
<dbReference type="Pfam" id="PF08943">
    <property type="entry name" value="CsiD"/>
    <property type="match status" value="1"/>
</dbReference>
<dbReference type="SUPFAM" id="SSF51197">
    <property type="entry name" value="Clavaminate synthase-like"/>
    <property type="match status" value="1"/>
</dbReference>
<accession>E1WA38</accession>
<accession>Q9FA43</accession>